<feature type="chain" id="PRO_0000416321" description="NAD(P)H-hydrate epimerase">
    <location>
        <begin position="1"/>
        <end position="228"/>
    </location>
</feature>
<feature type="domain" description="YjeF N-terminal" evidence="1">
    <location>
        <begin position="9"/>
        <end position="214"/>
    </location>
</feature>
<feature type="binding site" evidence="1">
    <location>
        <begin position="60"/>
        <end position="64"/>
    </location>
    <ligand>
        <name>(6S)-NADPHX</name>
        <dbReference type="ChEBI" id="CHEBI:64076"/>
    </ligand>
</feature>
<feature type="binding site" evidence="1">
    <location>
        <position position="61"/>
    </location>
    <ligand>
        <name>K(+)</name>
        <dbReference type="ChEBI" id="CHEBI:29103"/>
    </ligand>
</feature>
<feature type="binding site" evidence="1">
    <location>
        <position position="125"/>
    </location>
    <ligand>
        <name>K(+)</name>
        <dbReference type="ChEBI" id="CHEBI:29103"/>
    </ligand>
</feature>
<feature type="binding site" evidence="1">
    <location>
        <begin position="129"/>
        <end position="135"/>
    </location>
    <ligand>
        <name>(6S)-NADPHX</name>
        <dbReference type="ChEBI" id="CHEBI:64076"/>
    </ligand>
</feature>
<feature type="binding site" evidence="1">
    <location>
        <position position="158"/>
    </location>
    <ligand>
        <name>(6S)-NADPHX</name>
        <dbReference type="ChEBI" id="CHEBI:64076"/>
    </ligand>
</feature>
<feature type="binding site" evidence="1">
    <location>
        <position position="161"/>
    </location>
    <ligand>
        <name>K(+)</name>
        <dbReference type="ChEBI" id="CHEBI:29103"/>
    </ligand>
</feature>
<gene>
    <name type="ORF">v1g228490</name>
</gene>
<reference key="1">
    <citation type="journal article" date="2007" name="Science">
        <title>Sea anemone genome reveals ancestral eumetazoan gene repertoire and genomic organization.</title>
        <authorList>
            <person name="Putnam N.H."/>
            <person name="Srivastava M."/>
            <person name="Hellsten U."/>
            <person name="Dirks B."/>
            <person name="Chapman J."/>
            <person name="Salamov A."/>
            <person name="Terry A."/>
            <person name="Shapiro H."/>
            <person name="Lindquist E."/>
            <person name="Kapitonov V.V."/>
            <person name="Jurka J."/>
            <person name="Genikhovich G."/>
            <person name="Grigoriev I.V."/>
            <person name="Lucas S.M."/>
            <person name="Steele R.E."/>
            <person name="Finnerty J.R."/>
            <person name="Technau U."/>
            <person name="Martindale M.Q."/>
            <person name="Rokhsar D.S."/>
        </authorList>
    </citation>
    <scope>NUCLEOTIDE SEQUENCE [LARGE SCALE GENOMIC DNA]</scope>
    <source>
        <strain>CH2 X CH6</strain>
    </source>
</reference>
<accession>A7RPT4</accession>
<dbReference type="EC" id="5.1.99.6"/>
<dbReference type="EMBL" id="DS469526">
    <property type="protein sequence ID" value="EDO46631.1"/>
    <property type="molecule type" value="Genomic_DNA"/>
</dbReference>
<dbReference type="RefSeq" id="XP_001638694.1">
    <property type="nucleotide sequence ID" value="XM_001638644.1"/>
</dbReference>
<dbReference type="SMR" id="A7RPT4"/>
<dbReference type="STRING" id="45351.A7RPT4"/>
<dbReference type="EnsemblMetazoa" id="EDO46631">
    <property type="protein sequence ID" value="EDO46631"/>
    <property type="gene ID" value="NEMVEDRAFT_v1g228490"/>
</dbReference>
<dbReference type="KEGG" id="nve:5518747"/>
<dbReference type="eggNOG" id="KOG2585">
    <property type="taxonomic scope" value="Eukaryota"/>
</dbReference>
<dbReference type="HOGENOM" id="CLU_024853_3_0_1"/>
<dbReference type="InParanoid" id="A7RPT4"/>
<dbReference type="OMA" id="SMFRGRY"/>
<dbReference type="OrthoDB" id="10064708at2759"/>
<dbReference type="PhylomeDB" id="A7RPT4"/>
<dbReference type="Proteomes" id="UP000001593">
    <property type="component" value="Unassembled WGS sequence"/>
</dbReference>
<dbReference type="GO" id="GO:0005739">
    <property type="term" value="C:mitochondrion"/>
    <property type="evidence" value="ECO:0000318"/>
    <property type="project" value="GO_Central"/>
</dbReference>
<dbReference type="GO" id="GO:0046872">
    <property type="term" value="F:metal ion binding"/>
    <property type="evidence" value="ECO:0007669"/>
    <property type="project" value="UniProtKB-KW"/>
</dbReference>
<dbReference type="GO" id="GO:0052856">
    <property type="term" value="F:NAD(P)HX epimerase activity"/>
    <property type="evidence" value="ECO:0000318"/>
    <property type="project" value="GO_Central"/>
</dbReference>
<dbReference type="GO" id="GO:0000166">
    <property type="term" value="F:nucleotide binding"/>
    <property type="evidence" value="ECO:0007669"/>
    <property type="project" value="UniProtKB-KW"/>
</dbReference>
<dbReference type="FunFam" id="3.40.50.10260:FF:000002">
    <property type="entry name" value="NAD(P)H-hydrate epimerase"/>
    <property type="match status" value="1"/>
</dbReference>
<dbReference type="Gene3D" id="3.40.50.10260">
    <property type="entry name" value="YjeF N-terminal domain"/>
    <property type="match status" value="1"/>
</dbReference>
<dbReference type="HAMAP" id="MF_01966">
    <property type="entry name" value="NADHX_epimerase"/>
    <property type="match status" value="1"/>
</dbReference>
<dbReference type="InterPro" id="IPR004443">
    <property type="entry name" value="YjeF_N_dom"/>
</dbReference>
<dbReference type="InterPro" id="IPR036652">
    <property type="entry name" value="YjeF_N_dom_sf"/>
</dbReference>
<dbReference type="InterPro" id="IPR032976">
    <property type="entry name" value="YJEFN_prot_NAXE-like"/>
</dbReference>
<dbReference type="NCBIfam" id="TIGR00197">
    <property type="entry name" value="yjeF_nterm"/>
    <property type="match status" value="1"/>
</dbReference>
<dbReference type="PANTHER" id="PTHR13232">
    <property type="entry name" value="NAD(P)H-HYDRATE EPIMERASE"/>
    <property type="match status" value="1"/>
</dbReference>
<dbReference type="PANTHER" id="PTHR13232:SF10">
    <property type="entry name" value="NAD(P)H-HYDRATE EPIMERASE"/>
    <property type="match status" value="1"/>
</dbReference>
<dbReference type="Pfam" id="PF03853">
    <property type="entry name" value="YjeF_N"/>
    <property type="match status" value="1"/>
</dbReference>
<dbReference type="SUPFAM" id="SSF64153">
    <property type="entry name" value="YjeF N-terminal domain-like"/>
    <property type="match status" value="1"/>
</dbReference>
<dbReference type="PROSITE" id="PS51385">
    <property type="entry name" value="YJEF_N"/>
    <property type="match status" value="1"/>
</dbReference>
<protein>
    <recommendedName>
        <fullName evidence="1">NAD(P)H-hydrate epimerase</fullName>
        <ecNumber>5.1.99.6</ecNumber>
    </recommendedName>
    <alternativeName>
        <fullName evidence="1">NAD(P)HX epimerase</fullName>
    </alternativeName>
</protein>
<proteinExistence type="inferred from homology"/>
<name>NNRE_NEMVE</name>
<organism>
    <name type="scientific">Nematostella vectensis</name>
    <name type="common">Starlet sea anemone</name>
    <dbReference type="NCBI Taxonomy" id="45351"/>
    <lineage>
        <taxon>Eukaryota</taxon>
        <taxon>Metazoa</taxon>
        <taxon>Cnidaria</taxon>
        <taxon>Anthozoa</taxon>
        <taxon>Hexacorallia</taxon>
        <taxon>Actiniaria</taxon>
        <taxon>Edwardsiidae</taxon>
        <taxon>Nematostella</taxon>
    </lineage>
</organism>
<sequence>MRYLNQSEAQNIDQELFNEYAFSVDQLMELAGLSVAVAISKAYPRTGDGERLLVCSGPGNNGGDGLVAARHLKMFGYQPEIYYPKRPNRTLMNNLVTQCEKMEISFLTDLPSAQEMNFKYRLVVDAIFGFSFKGEVRAPFDDVLKTLKNVKIPLCAVDVPSGWDVEKGNPEGIQPEFLISLTAPKLCANHFKGRFHYLGGRFVPDLLLKKYELELPDFPGTDPCVLLE</sequence>
<keyword id="KW-0413">Isomerase</keyword>
<keyword id="KW-0479">Metal-binding</keyword>
<keyword id="KW-0520">NAD</keyword>
<keyword id="KW-0521">NADP</keyword>
<keyword id="KW-0547">Nucleotide-binding</keyword>
<keyword id="KW-0630">Potassium</keyword>
<keyword id="KW-1185">Reference proteome</keyword>
<evidence type="ECO:0000255" key="1">
    <source>
        <dbReference type="HAMAP-Rule" id="MF_03159"/>
    </source>
</evidence>
<comment type="function">
    <text evidence="1">Catalyzes the epimerization of the S- and R-forms of NAD(P)HX, a damaged form of NAD(P)H that is a result of enzymatic or heat-dependent hydration. This is a prerequisite for the S-specific NAD(P)H-hydrate dehydratase to allow the repair of both epimers of NAD(P)HX.</text>
</comment>
<comment type="catalytic activity">
    <reaction>
        <text>(6R)-NADHX = (6S)-NADHX</text>
        <dbReference type="Rhea" id="RHEA:32215"/>
        <dbReference type="ChEBI" id="CHEBI:64074"/>
        <dbReference type="ChEBI" id="CHEBI:64075"/>
        <dbReference type="EC" id="5.1.99.6"/>
    </reaction>
</comment>
<comment type="catalytic activity">
    <reaction>
        <text>(6R)-NADPHX = (6S)-NADPHX</text>
        <dbReference type="Rhea" id="RHEA:32227"/>
        <dbReference type="ChEBI" id="CHEBI:64076"/>
        <dbReference type="ChEBI" id="CHEBI:64077"/>
        <dbReference type="EC" id="5.1.99.6"/>
    </reaction>
</comment>
<comment type="cofactor">
    <cofactor evidence="1">
        <name>K(+)</name>
        <dbReference type="ChEBI" id="CHEBI:29103"/>
    </cofactor>
    <text evidence="1">Binds 1 potassium ion per subunit.</text>
</comment>
<comment type="similarity">
    <text evidence="1">Belongs to the NnrE/AIBP family.</text>
</comment>